<reference key="1">
    <citation type="journal article" date="1997" name="Nature">
        <title>The nucleotide sequence of Saccharomyces cerevisiae chromosome XIII.</title>
        <authorList>
            <person name="Bowman S."/>
            <person name="Churcher C.M."/>
            <person name="Badcock K."/>
            <person name="Brown D."/>
            <person name="Chillingworth T."/>
            <person name="Connor R."/>
            <person name="Dedman K."/>
            <person name="Devlin K."/>
            <person name="Gentles S."/>
            <person name="Hamlin N."/>
            <person name="Hunt S."/>
            <person name="Jagels K."/>
            <person name="Lye G."/>
            <person name="Moule S."/>
            <person name="Odell C."/>
            <person name="Pearson D."/>
            <person name="Rajandream M.A."/>
            <person name="Rice P."/>
            <person name="Skelton J."/>
            <person name="Walsh S.V."/>
            <person name="Whitehead S."/>
            <person name="Barrell B.G."/>
        </authorList>
    </citation>
    <scope>NUCLEOTIDE SEQUENCE [LARGE SCALE GENOMIC DNA]</scope>
    <source>
        <strain>ATCC 204508 / S288c</strain>
    </source>
</reference>
<reference key="2">
    <citation type="journal article" date="2014" name="G3 (Bethesda)">
        <title>The reference genome sequence of Saccharomyces cerevisiae: Then and now.</title>
        <authorList>
            <person name="Engel S.R."/>
            <person name="Dietrich F.S."/>
            <person name="Fisk D.G."/>
            <person name="Binkley G."/>
            <person name="Balakrishnan R."/>
            <person name="Costanzo M.C."/>
            <person name="Dwight S.S."/>
            <person name="Hitz B.C."/>
            <person name="Karra K."/>
            <person name="Nash R.S."/>
            <person name="Weng S."/>
            <person name="Wong E.D."/>
            <person name="Lloyd P."/>
            <person name="Skrzypek M.S."/>
            <person name="Miyasato S.R."/>
            <person name="Simison M."/>
            <person name="Cherry J.M."/>
        </authorList>
    </citation>
    <scope>GENOME REANNOTATION</scope>
    <source>
        <strain>ATCC 204508 / S288c</strain>
    </source>
</reference>
<reference key="3">
    <citation type="journal article" date="2003" name="Mol. Cell. Biol.">
        <title>Far3 and five interacting proteins prevent premature recovery from pheromone arrest in the budding yeast Saccharomyces cerevisiae.</title>
        <authorList>
            <person name="Kemp H.A."/>
            <person name="Sprague G.F. Jr."/>
        </authorList>
    </citation>
    <scope>FUNCTION</scope>
    <scope>INTERACTION WITH FAR3; FAR7; FAR10; FAR11 AND VPS64</scope>
</reference>
<reference key="4">
    <citation type="journal article" date="2003" name="Nature">
        <title>Global analysis of protein localization in budding yeast.</title>
        <authorList>
            <person name="Huh W.-K."/>
            <person name="Falvo J.V."/>
            <person name="Gerke L.C."/>
            <person name="Carroll A.S."/>
            <person name="Howson R.W."/>
            <person name="Weissman J.S."/>
            <person name="O'Shea E.K."/>
        </authorList>
    </citation>
    <scope>SUBCELLULAR LOCATION [LARGE SCALE ANALYSIS]</scope>
</reference>
<reference key="5">
    <citation type="journal article" date="2003" name="Nature">
        <title>Global analysis of protein expression in yeast.</title>
        <authorList>
            <person name="Ghaemmaghami S."/>
            <person name="Huh W.-K."/>
            <person name="Bower K."/>
            <person name="Howson R.W."/>
            <person name="Belle A."/>
            <person name="Dephoure N."/>
            <person name="O'Shea E.K."/>
            <person name="Weissman J.S."/>
        </authorList>
    </citation>
    <scope>LEVEL OF PROTEIN EXPRESSION [LARGE SCALE ANALYSIS]</scope>
</reference>
<reference key="6">
    <citation type="journal article" date="2007" name="J. Proteome Res.">
        <title>Large-scale phosphorylation analysis of alpha-factor-arrested Saccharomyces cerevisiae.</title>
        <authorList>
            <person name="Li X."/>
            <person name="Gerber S.A."/>
            <person name="Rudner A.D."/>
            <person name="Beausoleil S.A."/>
            <person name="Haas W."/>
            <person name="Villen J."/>
            <person name="Elias J.E."/>
            <person name="Gygi S.P."/>
        </authorList>
    </citation>
    <scope>PHOSPHORYLATION [LARGE SCALE ANALYSIS] AT THR-132</scope>
    <scope>IDENTIFICATION BY MASS SPECTROMETRY [LARGE SCALE ANALYSIS]</scope>
    <source>
        <strain>ADR376</strain>
    </source>
</reference>
<reference key="7">
    <citation type="journal article" date="2008" name="Mol. Cell. Proteomics">
        <title>A multidimensional chromatography technology for in-depth phosphoproteome analysis.</title>
        <authorList>
            <person name="Albuquerque C.P."/>
            <person name="Smolka M.B."/>
            <person name="Payne S.H."/>
            <person name="Bafna V."/>
            <person name="Eng J."/>
            <person name="Zhou H."/>
        </authorList>
    </citation>
    <scope>PHOSPHORYLATION [LARGE SCALE ANALYSIS] AT SER-115</scope>
    <scope>IDENTIFICATION BY MASS SPECTROMETRY [LARGE SCALE ANALYSIS]</scope>
</reference>
<reference key="8">
    <citation type="journal article" date="2009" name="Science">
        <title>Global analysis of Cdk1 substrate phosphorylation sites provides insights into evolution.</title>
        <authorList>
            <person name="Holt L.J."/>
            <person name="Tuch B.B."/>
            <person name="Villen J."/>
            <person name="Johnson A.D."/>
            <person name="Gygi S.P."/>
            <person name="Morgan D.O."/>
        </authorList>
    </citation>
    <scope>PHOSPHORYLATION [LARGE SCALE ANALYSIS] AT THR-132</scope>
    <scope>IDENTIFICATION BY MASS SPECTROMETRY [LARGE SCALE ANALYSIS]</scope>
</reference>
<comment type="function">
    <text evidence="3">Participates in the control of the reentry into the cell cycle following pheromone treatment.</text>
</comment>
<comment type="subunit">
    <text>Component of a complex at least composed of FAR3, FAR7, FAR8, FAR10, FAR11 and VPS64.</text>
</comment>
<comment type="interaction">
    <interactant intactId="EBI-28053">
        <id>Q05040</id>
    </interactant>
    <interactant intactId="EBI-6789">
        <id>P46671</id>
        <label>FAR3</label>
    </interactant>
    <organismsDiffer>false</organismsDiffer>
    <experiments>4</experiments>
</comment>
<comment type="interaction">
    <interactant intactId="EBI-28053">
        <id>Q05040</id>
    </interactant>
    <interactant intactId="EBI-22932">
        <id>P43592</id>
        <label>FAR7</label>
    </interactant>
    <organismsDiffer>false</organismsDiffer>
    <experiments>3</experiments>
</comment>
<comment type="interaction">
    <interactant intactId="EBI-28053">
        <id>Q05040</id>
    </interactant>
    <interactant intactId="EBI-6314">
        <id>P02994</id>
        <label>TEF2</label>
    </interactant>
    <organismsDiffer>false</organismsDiffer>
    <experiments>2</experiments>
</comment>
<comment type="subcellular location">
    <subcellularLocation>
        <location evidence="4">Cytoplasm</location>
    </subcellularLocation>
    <subcellularLocation>
        <location evidence="4">Endoplasmic reticulum</location>
    </subcellularLocation>
</comment>
<comment type="miscellaneous">
    <text evidence="5">Present with 4010 molecules/cell in log phase SD medium.</text>
</comment>
<gene>
    <name type="primary">FAR8</name>
    <name type="ordered locus">YMR029C</name>
    <name type="ORF">YM9973.02C</name>
</gene>
<dbReference type="EMBL" id="Z49213">
    <property type="protein sequence ID" value="CAA89144.1"/>
    <property type="molecule type" value="Genomic_DNA"/>
</dbReference>
<dbReference type="EMBL" id="BK006946">
    <property type="protein sequence ID" value="DAA09927.1"/>
    <property type="molecule type" value="Genomic_DNA"/>
</dbReference>
<dbReference type="PIR" id="S53945">
    <property type="entry name" value="S53945"/>
</dbReference>
<dbReference type="RefSeq" id="NP_013742.1">
    <property type="nucleotide sequence ID" value="NM_001182525.1"/>
</dbReference>
<dbReference type="SMR" id="Q05040"/>
<dbReference type="BioGRID" id="35201">
    <property type="interactions" value="142"/>
</dbReference>
<dbReference type="ComplexPortal" id="CPX-1197">
    <property type="entry name" value="FAR complex"/>
</dbReference>
<dbReference type="DIP" id="DIP-6343N"/>
<dbReference type="FunCoup" id="Q05040">
    <property type="interactions" value="104"/>
</dbReference>
<dbReference type="IntAct" id="Q05040">
    <property type="interactions" value="18"/>
</dbReference>
<dbReference type="MINT" id="Q05040"/>
<dbReference type="STRING" id="4932.YMR029C"/>
<dbReference type="iPTMnet" id="Q05040"/>
<dbReference type="PaxDb" id="4932-YMR029C"/>
<dbReference type="PeptideAtlas" id="Q05040"/>
<dbReference type="EnsemblFungi" id="YMR029C_mRNA">
    <property type="protein sequence ID" value="YMR029C"/>
    <property type="gene ID" value="YMR029C"/>
</dbReference>
<dbReference type="GeneID" id="855044"/>
<dbReference type="KEGG" id="sce:YMR029C"/>
<dbReference type="AGR" id="SGD:S000004631"/>
<dbReference type="SGD" id="S000004631">
    <property type="gene designation" value="FAR8"/>
</dbReference>
<dbReference type="VEuPathDB" id="FungiDB:YMR029C"/>
<dbReference type="eggNOG" id="KOG0642">
    <property type="taxonomic scope" value="Eukaryota"/>
</dbReference>
<dbReference type="GeneTree" id="ENSGT00950000183095"/>
<dbReference type="HOGENOM" id="CLU_034775_0_0_1"/>
<dbReference type="InParanoid" id="Q05040"/>
<dbReference type="OMA" id="ERDRITW"/>
<dbReference type="OrthoDB" id="727118at2759"/>
<dbReference type="BioCyc" id="YEAST:G3O-32734-MONOMER"/>
<dbReference type="BioGRID-ORCS" id="855044">
    <property type="hits" value="1 hit in 10 CRISPR screens"/>
</dbReference>
<dbReference type="PRO" id="PR:Q05040"/>
<dbReference type="Proteomes" id="UP000002311">
    <property type="component" value="Chromosome XIII"/>
</dbReference>
<dbReference type="RNAct" id="Q05040">
    <property type="molecule type" value="protein"/>
</dbReference>
<dbReference type="GO" id="GO:0005829">
    <property type="term" value="C:cytosol"/>
    <property type="evidence" value="ECO:0007005"/>
    <property type="project" value="SGD"/>
</dbReference>
<dbReference type="GO" id="GO:0005783">
    <property type="term" value="C:endoplasmic reticulum"/>
    <property type="evidence" value="ECO:0000314"/>
    <property type="project" value="SGD"/>
</dbReference>
<dbReference type="GO" id="GO:0005789">
    <property type="term" value="C:endoplasmic reticulum membrane"/>
    <property type="evidence" value="ECO:0000303"/>
    <property type="project" value="ComplexPortal"/>
</dbReference>
<dbReference type="GO" id="GO:0090443">
    <property type="term" value="C:FAR/SIN/STRIPAK complex"/>
    <property type="evidence" value="ECO:0000318"/>
    <property type="project" value="GO_Central"/>
</dbReference>
<dbReference type="GO" id="GO:0071444">
    <property type="term" value="P:cellular response to pheromone"/>
    <property type="evidence" value="ECO:0000303"/>
    <property type="project" value="ComplexPortal"/>
</dbReference>
<dbReference type="GO" id="GO:0000321">
    <property type="term" value="P:re-entry into mitotic cell cycle after pheromone arrest"/>
    <property type="evidence" value="ECO:0000316"/>
    <property type="project" value="SGD"/>
</dbReference>
<dbReference type="GO" id="GO:0051726">
    <property type="term" value="P:regulation of cell cycle"/>
    <property type="evidence" value="ECO:0000303"/>
    <property type="project" value="ComplexPortal"/>
</dbReference>
<dbReference type="GO" id="GO:0009966">
    <property type="term" value="P:regulation of signal transduction"/>
    <property type="evidence" value="ECO:0000318"/>
    <property type="project" value="GO_Central"/>
</dbReference>
<dbReference type="Gene3D" id="1.20.5.300">
    <property type="match status" value="1"/>
</dbReference>
<dbReference type="InterPro" id="IPR013258">
    <property type="entry name" value="Striatin_N"/>
</dbReference>
<dbReference type="InterPro" id="IPR036322">
    <property type="entry name" value="WD40_repeat_dom_sf"/>
</dbReference>
<dbReference type="InterPro" id="IPR051488">
    <property type="entry name" value="WD_repeat_striatin"/>
</dbReference>
<dbReference type="PANTHER" id="PTHR15653:SF0">
    <property type="entry name" value="CONNECTOR OF KINASE TO AP-1, ISOFORM E"/>
    <property type="match status" value="1"/>
</dbReference>
<dbReference type="PANTHER" id="PTHR15653">
    <property type="entry name" value="STRIATIN"/>
    <property type="match status" value="1"/>
</dbReference>
<dbReference type="Pfam" id="PF08232">
    <property type="entry name" value="Striatin"/>
    <property type="match status" value="1"/>
</dbReference>
<dbReference type="SUPFAM" id="SSF50978">
    <property type="entry name" value="WD40 repeat-like"/>
    <property type="match status" value="1"/>
</dbReference>
<name>FAR8_YEAST</name>
<evidence type="ECO:0000255" key="1"/>
<evidence type="ECO:0000256" key="2">
    <source>
        <dbReference type="SAM" id="MobiDB-lite"/>
    </source>
</evidence>
<evidence type="ECO:0000269" key="3">
    <source>
    </source>
</evidence>
<evidence type="ECO:0000269" key="4">
    <source>
    </source>
</evidence>
<evidence type="ECO:0000269" key="5">
    <source>
    </source>
</evidence>
<evidence type="ECO:0007744" key="6">
    <source>
    </source>
</evidence>
<evidence type="ECO:0007744" key="7">
    <source>
    </source>
</evidence>
<evidence type="ECO:0007744" key="8">
    <source>
    </source>
</evidence>
<feature type="chain" id="PRO_0000087193" description="Factor arrest protein 8">
    <location>
        <begin position="1"/>
        <end position="523"/>
    </location>
</feature>
<feature type="region of interest" description="Disordered" evidence="2">
    <location>
        <begin position="61"/>
        <end position="80"/>
    </location>
</feature>
<feature type="region of interest" description="Disordered" evidence="2">
    <location>
        <begin position="150"/>
        <end position="171"/>
    </location>
</feature>
<feature type="coiled-coil region" evidence="1">
    <location>
        <begin position="26"/>
        <end position="76"/>
    </location>
</feature>
<feature type="compositionally biased region" description="Basic and acidic residues" evidence="2">
    <location>
        <begin position="71"/>
        <end position="80"/>
    </location>
</feature>
<feature type="compositionally biased region" description="Polar residues" evidence="2">
    <location>
        <begin position="160"/>
        <end position="171"/>
    </location>
</feature>
<feature type="modified residue" description="Phosphoserine" evidence="7">
    <location>
        <position position="115"/>
    </location>
</feature>
<feature type="modified residue" description="Phosphothreonine" evidence="6 8">
    <location>
        <position position="132"/>
    </location>
</feature>
<organism>
    <name type="scientific">Saccharomyces cerevisiae (strain ATCC 204508 / S288c)</name>
    <name type="common">Baker's yeast</name>
    <dbReference type="NCBI Taxonomy" id="559292"/>
    <lineage>
        <taxon>Eukaryota</taxon>
        <taxon>Fungi</taxon>
        <taxon>Dikarya</taxon>
        <taxon>Ascomycota</taxon>
        <taxon>Saccharomycotina</taxon>
        <taxon>Saccharomycetes</taxon>
        <taxon>Saccharomycetales</taxon>
        <taxon>Saccharomycetaceae</taxon>
        <taxon>Saccharomyces</taxon>
    </lineage>
</organism>
<proteinExistence type="evidence at protein level"/>
<accession>Q05040</accession>
<accession>D6VZK3</accession>
<protein>
    <recommendedName>
        <fullName>Factor arrest protein 8</fullName>
    </recommendedName>
</protein>
<keyword id="KW-0131">Cell cycle</keyword>
<keyword id="KW-0175">Coiled coil</keyword>
<keyword id="KW-0963">Cytoplasm</keyword>
<keyword id="KW-0256">Endoplasmic reticulum</keyword>
<keyword id="KW-0597">Phosphoprotein</keyword>
<keyword id="KW-1185">Reference proteome</keyword>
<sequence>MAINQAHVHPHYTLPGVMHYLQTEFTKNERDRITWELERSEMKARIAELEGENRDLKHQLNQIQSKAVSPEGEKEEKHVPDSLLQSKLAVQENVKEIIYLLKGPNTVNQLESLNSREAGSELHDLEKLNVNTPKEEGSAKTNGMDILNNALLDTKPNPKQGPSESPSPTKVKSLFSTANKRENNETISKIHSELSKVDIISSYGDCMALYDADTKSLEIHQVDANLNSKLLKKISLGQDSDIMKFFWVSTSKLLVIEKSFHLKLFSISSASLISDVDLLQDSEQPFSSSDIINIDFKNKWLLIASKNKSQIRIWELDNIEAPEDVPINIKETYEITHDNDDDDSNDSTNILDCILGITEKSLILLSSNPYQLTIYDFEGKLLQKIDLKIDTILSGKPEEEGYHLFLDRKTSKLLIQLSNERLLVYSFDKKKVVLKEQLTPSSTLPIQLDLNDSIITVSYSNGDFEFRNLENLKPSIDEFVVADINFSERKEPVVFSSNLIVDSTPVLITVNKNNEVLLHKIKI</sequence>